<protein>
    <recommendedName>
        <fullName>U37-theraphotoxin-Cg1b</fullName>
        <shortName>U37-TRTX-Cg1b</shortName>
    </recommendedName>
    <alternativeName>
        <fullName evidence="4">Jingzhaotoxin-like peptide JZTX-68</fullName>
        <shortName evidence="4">JZTX-68</shortName>
    </alternativeName>
</protein>
<name>JZT68_CHIGU</name>
<keyword id="KW-0964">Secreted</keyword>
<keyword id="KW-0732">Signal</keyword>
<keyword id="KW-0800">Toxin</keyword>
<organism>
    <name type="scientific">Chilobrachys guangxiensis</name>
    <name type="common">Chinese earth tiger tarantula</name>
    <name type="synonym">Chilobrachys jingzhao</name>
    <dbReference type="NCBI Taxonomy" id="278060"/>
    <lineage>
        <taxon>Eukaryota</taxon>
        <taxon>Metazoa</taxon>
        <taxon>Ecdysozoa</taxon>
        <taxon>Arthropoda</taxon>
        <taxon>Chelicerata</taxon>
        <taxon>Arachnida</taxon>
        <taxon>Araneae</taxon>
        <taxon>Mygalomorphae</taxon>
        <taxon>Theraphosidae</taxon>
        <taxon>Chilobrachys</taxon>
    </lineage>
</organism>
<accession>B1P1I8</accession>
<comment type="subcellular location">
    <subcellularLocation>
        <location evidence="1">Secreted</location>
    </subcellularLocation>
</comment>
<comment type="tissue specificity">
    <text>Expressed by the venom gland.</text>
</comment>
<comment type="similarity">
    <text evidence="3">Belongs to the neurotoxin 10 (Hwtx-1) family. 67 (Jztx-67) subfamily.</text>
</comment>
<comment type="caution">
    <text evidence="3">Lacks the C-terminal part containing the 'disulfide through disulfide knot' structure.</text>
</comment>
<reference key="1">
    <citation type="journal article" date="2008" name="Cell. Mol. Life Sci.">
        <title>Molecular diversity and evolution of cystine knot toxins of the tarantula Chilobrachys jingzhao.</title>
        <authorList>
            <person name="Chen J."/>
            <person name="Deng M."/>
            <person name="He Q."/>
            <person name="Meng E."/>
            <person name="Jiang L."/>
            <person name="Liao Z."/>
            <person name="Rong M."/>
            <person name="Liang S."/>
        </authorList>
    </citation>
    <scope>NUCLEOTIDE SEQUENCE [LARGE SCALE MRNA]</scope>
    <source>
        <tissue>Venom gland</tissue>
    </source>
</reference>
<sequence>MRVLLIIAGLALLSVVCYTSEMKEQNSLNEVLSAFFDVEEPPEKGCIICF</sequence>
<dbReference type="EMBL" id="EU233919">
    <property type="protein sequence ID" value="ABY71738.1"/>
    <property type="molecule type" value="mRNA"/>
</dbReference>
<dbReference type="ArachnoServer" id="AS000867">
    <property type="toxin name" value="U37-theraphotoxin-Cg1b"/>
</dbReference>
<dbReference type="GO" id="GO:0005576">
    <property type="term" value="C:extracellular region"/>
    <property type="evidence" value="ECO:0007669"/>
    <property type="project" value="UniProtKB-SubCell"/>
</dbReference>
<dbReference type="GO" id="GO:0090729">
    <property type="term" value="F:toxin activity"/>
    <property type="evidence" value="ECO:0007669"/>
    <property type="project" value="UniProtKB-KW"/>
</dbReference>
<evidence type="ECO:0000250" key="1"/>
<evidence type="ECO:0000255" key="2"/>
<evidence type="ECO:0000305" key="3"/>
<evidence type="ECO:0000312" key="4">
    <source>
        <dbReference type="EMBL" id="ABY71738.1"/>
    </source>
</evidence>
<feature type="signal peptide" evidence="2">
    <location>
        <begin position="1"/>
        <end position="19"/>
    </location>
</feature>
<feature type="peptide" id="PRO_0000398551" description="U37-theraphotoxin-Cg1b">
    <location>
        <begin position="20"/>
        <end position="50"/>
    </location>
</feature>
<proteinExistence type="evidence at transcript level"/>